<comment type="function">
    <text evidence="1">Catalyzes the transfer of a ribosyl phosphate group from 5-phosphoribose 1-diphosphate to orotate, leading to the formation of orotidine monophosphate (OMP).</text>
</comment>
<comment type="catalytic activity">
    <reaction evidence="1">
        <text>orotidine 5'-phosphate + diphosphate = orotate + 5-phospho-alpha-D-ribose 1-diphosphate</text>
        <dbReference type="Rhea" id="RHEA:10380"/>
        <dbReference type="ChEBI" id="CHEBI:30839"/>
        <dbReference type="ChEBI" id="CHEBI:33019"/>
        <dbReference type="ChEBI" id="CHEBI:57538"/>
        <dbReference type="ChEBI" id="CHEBI:58017"/>
        <dbReference type="EC" id="2.4.2.10"/>
    </reaction>
</comment>
<comment type="cofactor">
    <cofactor evidence="1">
        <name>Mg(2+)</name>
        <dbReference type="ChEBI" id="CHEBI:18420"/>
    </cofactor>
</comment>
<comment type="pathway">
    <text evidence="1">Pyrimidine metabolism; UMP biosynthesis via de novo pathway; UMP from orotate: step 1/2.</text>
</comment>
<comment type="subunit">
    <text evidence="1">Homodimer.</text>
</comment>
<comment type="similarity">
    <text evidence="1">Belongs to the purine/pyrimidine phosphoribosyltransferase family. PyrE subfamily.</text>
</comment>
<protein>
    <recommendedName>
        <fullName evidence="1">Orotate phosphoribosyltransferase</fullName>
        <shortName evidence="1">OPRT</shortName>
        <shortName evidence="1">OPRTase</shortName>
        <ecNumber evidence="1">2.4.2.10</ecNumber>
    </recommendedName>
</protein>
<accession>B9JQW1</accession>
<evidence type="ECO:0000255" key="1">
    <source>
        <dbReference type="HAMAP-Rule" id="MF_01208"/>
    </source>
</evidence>
<dbReference type="EC" id="2.4.2.10" evidence="1"/>
<dbReference type="EMBL" id="CP000633">
    <property type="protein sequence ID" value="ACM35374.1"/>
    <property type="molecule type" value="Genomic_DNA"/>
</dbReference>
<dbReference type="RefSeq" id="WP_015914802.1">
    <property type="nucleotide sequence ID" value="NC_011989.1"/>
</dbReference>
<dbReference type="SMR" id="B9JQW1"/>
<dbReference type="STRING" id="311402.Avi_0528"/>
<dbReference type="KEGG" id="avi:Avi_0528"/>
<dbReference type="eggNOG" id="COG0461">
    <property type="taxonomic scope" value="Bacteria"/>
</dbReference>
<dbReference type="HOGENOM" id="CLU_074878_1_0_5"/>
<dbReference type="UniPathway" id="UPA00070">
    <property type="reaction ID" value="UER00119"/>
</dbReference>
<dbReference type="Proteomes" id="UP000001596">
    <property type="component" value="Chromosome 1"/>
</dbReference>
<dbReference type="GO" id="GO:0000287">
    <property type="term" value="F:magnesium ion binding"/>
    <property type="evidence" value="ECO:0007669"/>
    <property type="project" value="UniProtKB-UniRule"/>
</dbReference>
<dbReference type="GO" id="GO:0004588">
    <property type="term" value="F:orotate phosphoribosyltransferase activity"/>
    <property type="evidence" value="ECO:0007669"/>
    <property type="project" value="UniProtKB-UniRule"/>
</dbReference>
<dbReference type="GO" id="GO:0044205">
    <property type="term" value="P:'de novo' UMP biosynthetic process"/>
    <property type="evidence" value="ECO:0007669"/>
    <property type="project" value="UniProtKB-UniRule"/>
</dbReference>
<dbReference type="GO" id="GO:0019856">
    <property type="term" value="P:pyrimidine nucleobase biosynthetic process"/>
    <property type="evidence" value="ECO:0007669"/>
    <property type="project" value="TreeGrafter"/>
</dbReference>
<dbReference type="CDD" id="cd06223">
    <property type="entry name" value="PRTases_typeI"/>
    <property type="match status" value="1"/>
</dbReference>
<dbReference type="Gene3D" id="3.40.50.2020">
    <property type="match status" value="1"/>
</dbReference>
<dbReference type="HAMAP" id="MF_01208">
    <property type="entry name" value="PyrE"/>
    <property type="match status" value="1"/>
</dbReference>
<dbReference type="InterPro" id="IPR023031">
    <property type="entry name" value="OPRT"/>
</dbReference>
<dbReference type="InterPro" id="IPR004467">
    <property type="entry name" value="Or_phspho_trans_dom"/>
</dbReference>
<dbReference type="InterPro" id="IPR000836">
    <property type="entry name" value="PRibTrfase_dom"/>
</dbReference>
<dbReference type="InterPro" id="IPR029057">
    <property type="entry name" value="PRTase-like"/>
</dbReference>
<dbReference type="NCBIfam" id="NF001729">
    <property type="entry name" value="PRK00455.1-3"/>
    <property type="match status" value="1"/>
</dbReference>
<dbReference type="NCBIfam" id="TIGR00336">
    <property type="entry name" value="pyrE"/>
    <property type="match status" value="1"/>
</dbReference>
<dbReference type="PANTHER" id="PTHR19278">
    <property type="entry name" value="OROTATE PHOSPHORIBOSYLTRANSFERASE"/>
    <property type="match status" value="1"/>
</dbReference>
<dbReference type="PANTHER" id="PTHR19278:SF9">
    <property type="entry name" value="URIDINE 5'-MONOPHOSPHATE SYNTHASE"/>
    <property type="match status" value="1"/>
</dbReference>
<dbReference type="Pfam" id="PF00156">
    <property type="entry name" value="Pribosyltran"/>
    <property type="match status" value="1"/>
</dbReference>
<dbReference type="SUPFAM" id="SSF53271">
    <property type="entry name" value="PRTase-like"/>
    <property type="match status" value="1"/>
</dbReference>
<reference key="1">
    <citation type="journal article" date="2009" name="J. Bacteriol.">
        <title>Genome sequences of three Agrobacterium biovars help elucidate the evolution of multichromosome genomes in bacteria.</title>
        <authorList>
            <person name="Slater S.C."/>
            <person name="Goldman B.S."/>
            <person name="Goodner B."/>
            <person name="Setubal J.C."/>
            <person name="Farrand S.K."/>
            <person name="Nester E.W."/>
            <person name="Burr T.J."/>
            <person name="Banta L."/>
            <person name="Dickerman A.W."/>
            <person name="Paulsen I."/>
            <person name="Otten L."/>
            <person name="Suen G."/>
            <person name="Welch R."/>
            <person name="Almeida N.F."/>
            <person name="Arnold F."/>
            <person name="Burton O.T."/>
            <person name="Du Z."/>
            <person name="Ewing A."/>
            <person name="Godsy E."/>
            <person name="Heisel S."/>
            <person name="Houmiel K.L."/>
            <person name="Jhaveri J."/>
            <person name="Lu J."/>
            <person name="Miller N.M."/>
            <person name="Norton S."/>
            <person name="Chen Q."/>
            <person name="Phoolcharoen W."/>
            <person name="Ohlin V."/>
            <person name="Ondrusek D."/>
            <person name="Pride N."/>
            <person name="Stricklin S.L."/>
            <person name="Sun J."/>
            <person name="Wheeler C."/>
            <person name="Wilson L."/>
            <person name="Zhu H."/>
            <person name="Wood D.W."/>
        </authorList>
    </citation>
    <scope>NUCLEOTIDE SEQUENCE [LARGE SCALE GENOMIC DNA]</scope>
    <source>
        <strain>ATCC BAA-846 / DSM 112012 / S4</strain>
    </source>
</reference>
<organism>
    <name type="scientific">Allorhizobium ampelinum (strain ATCC BAA-846 / DSM 112012 / S4)</name>
    <name type="common">Agrobacterium vitis (strain S4)</name>
    <dbReference type="NCBI Taxonomy" id="311402"/>
    <lineage>
        <taxon>Bacteria</taxon>
        <taxon>Pseudomonadati</taxon>
        <taxon>Pseudomonadota</taxon>
        <taxon>Alphaproteobacteria</taxon>
        <taxon>Hyphomicrobiales</taxon>
        <taxon>Rhizobiaceae</taxon>
        <taxon>Rhizobium/Agrobacterium group</taxon>
        <taxon>Allorhizobium</taxon>
        <taxon>Allorhizobium ampelinum</taxon>
    </lineage>
</organism>
<name>PYRE_ALLAM</name>
<gene>
    <name evidence="1" type="primary">pyrE</name>
    <name type="ordered locus">Avi_0528</name>
</gene>
<sequence length="230" mass="25209">MTQTSFSDPAVMAELLAKMLWEIKAVHFNAAEPYKLASGMRSPVYIDCRKLLSYPRVRSAVMDFAVATLLRNAGFEQFDCIAGGETAGIPFAALLADRLALPMIYVRKQPKGHGRNAQIEGHMPDGARVLVIEDLTTAGGSMFTFIDAVRAAGGVVDHGIALFFYGIFPQAHQRFENGNVKLHYIATWRNVLAVARDQKLFDDKTLSEVESFLDAPLEWSGRNGGVSTLG</sequence>
<proteinExistence type="inferred from homology"/>
<keyword id="KW-0328">Glycosyltransferase</keyword>
<keyword id="KW-0460">Magnesium</keyword>
<keyword id="KW-0665">Pyrimidine biosynthesis</keyword>
<keyword id="KW-1185">Reference proteome</keyword>
<keyword id="KW-0808">Transferase</keyword>
<feature type="chain" id="PRO_1000164667" description="Orotate phosphoribosyltransferase">
    <location>
        <begin position="1"/>
        <end position="230"/>
    </location>
</feature>
<feature type="binding site" evidence="1">
    <location>
        <position position="107"/>
    </location>
    <ligand>
        <name>5-phospho-alpha-D-ribose 1-diphosphate</name>
        <dbReference type="ChEBI" id="CHEBI:58017"/>
        <note>ligand shared between dimeric partners</note>
    </ligand>
</feature>
<feature type="binding site" description="in other chain" evidence="1">
    <location>
        <position position="108"/>
    </location>
    <ligand>
        <name>5-phospho-alpha-D-ribose 1-diphosphate</name>
        <dbReference type="ChEBI" id="CHEBI:58017"/>
        <note>ligand shared between dimeric partners</note>
    </ligand>
</feature>
<feature type="binding site" evidence="1">
    <location>
        <position position="111"/>
    </location>
    <ligand>
        <name>5-phospho-alpha-D-ribose 1-diphosphate</name>
        <dbReference type="ChEBI" id="CHEBI:58017"/>
        <note>ligand shared between dimeric partners</note>
    </ligand>
</feature>
<feature type="binding site" evidence="1">
    <location>
        <position position="113"/>
    </location>
    <ligand>
        <name>5-phospho-alpha-D-ribose 1-diphosphate</name>
        <dbReference type="ChEBI" id="CHEBI:58017"/>
        <note>ligand shared between dimeric partners</note>
    </ligand>
</feature>
<feature type="binding site" description="in other chain" evidence="1">
    <location>
        <begin position="133"/>
        <end position="141"/>
    </location>
    <ligand>
        <name>5-phospho-alpha-D-ribose 1-diphosphate</name>
        <dbReference type="ChEBI" id="CHEBI:58017"/>
        <note>ligand shared between dimeric partners</note>
    </ligand>
</feature>
<feature type="binding site" evidence="1">
    <location>
        <position position="137"/>
    </location>
    <ligand>
        <name>orotate</name>
        <dbReference type="ChEBI" id="CHEBI:30839"/>
    </ligand>
</feature>